<reference key="1">
    <citation type="journal article" date="2003" name="DNA Res.">
        <title>Complete nucleotide sequence of the chloroplast genome from a leptosporangiate fern, Adiantum capillus-veneris L.</title>
        <authorList>
            <person name="Wolf P.G."/>
            <person name="Rowe C.A."/>
            <person name="Sinclair R.B."/>
            <person name="Hasebe M."/>
        </authorList>
    </citation>
    <scope>NUCLEOTIDE SEQUENCE [LARGE SCALE GENOMIC DNA]</scope>
</reference>
<reference key="2">
    <citation type="journal article" date="2004" name="Gene">
        <title>High levels of RNA editing in a vascular plant chloroplast genome: analysis of transcripts from the fern Adiantum capillus-veneris.</title>
        <authorList>
            <person name="Wolf P.G."/>
            <person name="Rowe C.A."/>
            <person name="Hasebe M."/>
        </authorList>
    </citation>
    <scope>NUCLEOTIDE SEQUENCE [GENOMIC DNA]</scope>
    <scope>RNA EDITING</scope>
    <source>
        <tissue>Frond</tissue>
    </source>
</reference>
<organism>
    <name type="scientific">Adiantum capillus-veneris</name>
    <name type="common">Maidenhair fern</name>
    <dbReference type="NCBI Taxonomy" id="13818"/>
    <lineage>
        <taxon>Eukaryota</taxon>
        <taxon>Viridiplantae</taxon>
        <taxon>Streptophyta</taxon>
        <taxon>Embryophyta</taxon>
        <taxon>Tracheophyta</taxon>
        <taxon>Polypodiopsida</taxon>
        <taxon>Polypodiidae</taxon>
        <taxon>Polypodiales</taxon>
        <taxon>Pteridineae</taxon>
        <taxon>Pteridaceae</taxon>
        <taxon>Vittarioideae</taxon>
        <taxon>Adiantum</taxon>
    </lineage>
</organism>
<protein>
    <recommendedName>
        <fullName evidence="1">DNA-directed RNA polymerase subunit alpha</fullName>
        <shortName evidence="1">PEP</shortName>
        <ecNumber evidence="1">2.7.7.6</ecNumber>
    </recommendedName>
    <alternativeName>
        <fullName evidence="1">Plastid-encoded RNA polymerase subunit alpha</fullName>
        <shortName evidence="1">RNA polymerase subunit alpha</shortName>
    </alternativeName>
</protein>
<accession>Q85FJ1</accession>
<gene>
    <name evidence="1" type="primary">rpoA</name>
</gene>
<sequence>MRKNEMSTSKQAIQWKCLESKIESKRLHYGRFLVSPFKRGQASTVGIAMRRALLQEIEGTSITCARFCGVVHEYSTITGLQETIHDVLVNLKEIVLRGDSKEDIQEAFLSVTGPKEVTAGDLSLPPGVEAIDNSQYIATITQPISLTIELEIEKDCGYRIENLAKSGKGQFPIDAVFMPVRNVNYSIHLFGSGRATQEILFIEIWTNGSLTPHEALRKASEKLMDLLTTFLYVRGGDVSLFENGEDSLDLTKSPSLQPQFGDTNNLEERVLENRFIDQLELPARAFNCLKRAEIYTIADLLNYSREDLSKLKNFGRKSVDQVSEALWDRFAKELPDKKIVLNRRK</sequence>
<dbReference type="EC" id="2.7.7.6" evidence="1"/>
<dbReference type="EMBL" id="AY178864">
    <property type="protein sequence ID" value="AAP29422.2"/>
    <property type="molecule type" value="Genomic_DNA"/>
</dbReference>
<dbReference type="RefSeq" id="NP_848091.2">
    <property type="nucleotide sequence ID" value="NC_004766.1"/>
</dbReference>
<dbReference type="SMR" id="Q85FJ1"/>
<dbReference type="GeneID" id="807422"/>
<dbReference type="GO" id="GO:0009507">
    <property type="term" value="C:chloroplast"/>
    <property type="evidence" value="ECO:0007669"/>
    <property type="project" value="UniProtKB-SubCell"/>
</dbReference>
<dbReference type="GO" id="GO:0000428">
    <property type="term" value="C:DNA-directed RNA polymerase complex"/>
    <property type="evidence" value="ECO:0007669"/>
    <property type="project" value="UniProtKB-KW"/>
</dbReference>
<dbReference type="GO" id="GO:0005739">
    <property type="term" value="C:mitochondrion"/>
    <property type="evidence" value="ECO:0007669"/>
    <property type="project" value="GOC"/>
</dbReference>
<dbReference type="GO" id="GO:0003677">
    <property type="term" value="F:DNA binding"/>
    <property type="evidence" value="ECO:0007669"/>
    <property type="project" value="UniProtKB-UniRule"/>
</dbReference>
<dbReference type="GO" id="GO:0003899">
    <property type="term" value="F:DNA-directed RNA polymerase activity"/>
    <property type="evidence" value="ECO:0007669"/>
    <property type="project" value="UniProtKB-UniRule"/>
</dbReference>
<dbReference type="GO" id="GO:0046983">
    <property type="term" value="F:protein dimerization activity"/>
    <property type="evidence" value="ECO:0007669"/>
    <property type="project" value="InterPro"/>
</dbReference>
<dbReference type="GO" id="GO:0006351">
    <property type="term" value="P:DNA-templated transcription"/>
    <property type="evidence" value="ECO:0007669"/>
    <property type="project" value="UniProtKB-UniRule"/>
</dbReference>
<dbReference type="CDD" id="cd06928">
    <property type="entry name" value="RNAP_alpha_NTD"/>
    <property type="match status" value="1"/>
</dbReference>
<dbReference type="FunFam" id="2.170.120.12:FF:000001">
    <property type="entry name" value="DNA-directed RNA polymerase subunit alpha"/>
    <property type="match status" value="1"/>
</dbReference>
<dbReference type="Gene3D" id="1.10.150.20">
    <property type="entry name" value="5' to 3' exonuclease, C-terminal subdomain"/>
    <property type="match status" value="1"/>
</dbReference>
<dbReference type="Gene3D" id="2.170.120.12">
    <property type="entry name" value="DNA-directed RNA polymerase, insert domain"/>
    <property type="match status" value="1"/>
</dbReference>
<dbReference type="Gene3D" id="3.30.1360.10">
    <property type="entry name" value="RNA polymerase, RBP11-like subunit"/>
    <property type="match status" value="1"/>
</dbReference>
<dbReference type="HAMAP" id="MF_00059">
    <property type="entry name" value="RNApol_bact_RpoA"/>
    <property type="match status" value="1"/>
</dbReference>
<dbReference type="InterPro" id="IPR011262">
    <property type="entry name" value="DNA-dir_RNA_pol_insert"/>
</dbReference>
<dbReference type="InterPro" id="IPR011263">
    <property type="entry name" value="DNA-dir_RNA_pol_RpoA/D/Rpb3"/>
</dbReference>
<dbReference type="InterPro" id="IPR011773">
    <property type="entry name" value="DNA-dir_RpoA"/>
</dbReference>
<dbReference type="InterPro" id="IPR036603">
    <property type="entry name" value="RBP11-like"/>
</dbReference>
<dbReference type="InterPro" id="IPR011260">
    <property type="entry name" value="RNAP_asu_C"/>
</dbReference>
<dbReference type="InterPro" id="IPR036643">
    <property type="entry name" value="RNApol_insert_sf"/>
</dbReference>
<dbReference type="NCBIfam" id="TIGR02027">
    <property type="entry name" value="rpoA"/>
    <property type="match status" value="1"/>
</dbReference>
<dbReference type="Pfam" id="PF01000">
    <property type="entry name" value="RNA_pol_A_bac"/>
    <property type="match status" value="1"/>
</dbReference>
<dbReference type="Pfam" id="PF03118">
    <property type="entry name" value="RNA_pol_A_CTD"/>
    <property type="match status" value="1"/>
</dbReference>
<dbReference type="Pfam" id="PF01193">
    <property type="entry name" value="RNA_pol_L"/>
    <property type="match status" value="1"/>
</dbReference>
<dbReference type="SMART" id="SM00662">
    <property type="entry name" value="RPOLD"/>
    <property type="match status" value="1"/>
</dbReference>
<dbReference type="SUPFAM" id="SSF47789">
    <property type="entry name" value="C-terminal domain of RNA polymerase alpha subunit"/>
    <property type="match status" value="1"/>
</dbReference>
<dbReference type="SUPFAM" id="SSF56553">
    <property type="entry name" value="Insert subdomain of RNA polymerase alpha subunit"/>
    <property type="match status" value="1"/>
</dbReference>
<dbReference type="SUPFAM" id="SSF55257">
    <property type="entry name" value="RBP11-like subunits of RNA polymerase"/>
    <property type="match status" value="1"/>
</dbReference>
<proteinExistence type="evidence at transcript level"/>
<evidence type="ECO:0000255" key="1">
    <source>
        <dbReference type="HAMAP-Rule" id="MF_00059"/>
    </source>
</evidence>
<evidence type="ECO:0000269" key="2">
    <source>
    </source>
</evidence>
<name>RPOA_ADICA</name>
<keyword id="KW-0150">Chloroplast</keyword>
<keyword id="KW-0240">DNA-directed RNA polymerase</keyword>
<keyword id="KW-0548">Nucleotidyltransferase</keyword>
<keyword id="KW-0934">Plastid</keyword>
<keyword id="KW-0691">RNA editing</keyword>
<keyword id="KW-0804">Transcription</keyword>
<keyword id="KW-0808">Transferase</keyword>
<comment type="function">
    <text evidence="1">DNA-dependent RNA polymerase catalyzes the transcription of DNA into RNA using the four ribonucleoside triphosphates as substrates.</text>
</comment>
<comment type="catalytic activity">
    <reaction evidence="1">
        <text>RNA(n) + a ribonucleoside 5'-triphosphate = RNA(n+1) + diphosphate</text>
        <dbReference type="Rhea" id="RHEA:21248"/>
        <dbReference type="Rhea" id="RHEA-COMP:14527"/>
        <dbReference type="Rhea" id="RHEA-COMP:17342"/>
        <dbReference type="ChEBI" id="CHEBI:33019"/>
        <dbReference type="ChEBI" id="CHEBI:61557"/>
        <dbReference type="ChEBI" id="CHEBI:140395"/>
        <dbReference type="EC" id="2.7.7.6"/>
    </reaction>
</comment>
<comment type="subunit">
    <text evidence="1">In plastids the minimal PEP RNA polymerase catalytic core is composed of four subunits: alpha, beta, beta', and beta''. When a (nuclear-encoded) sigma factor is associated with the core the holoenzyme is formed, which can initiate transcription.</text>
</comment>
<comment type="subcellular location">
    <subcellularLocation>
        <location>Plastid</location>
        <location>Chloroplast</location>
    </subcellularLocation>
</comment>
<comment type="domain">
    <text evidence="1">The N-terminal domain is essential for RNAP assembly and basal transcription, whereas the C-terminal domain is involved in interaction with transcriptional regulators and with upstream promoter elements.</text>
</comment>
<comment type="RNA editing">
    <location>
        <position position="54" evidence="2"/>
    </location>
    <location>
        <position position="87" evidence="2"/>
    </location>
    <location>
        <position position="91" evidence="2"/>
    </location>
    <location>
        <position position="109" evidence="2"/>
    </location>
    <location>
        <position position="122" evidence="2"/>
    </location>
    <location>
        <position position="200" evidence="2"/>
    </location>
    <location>
        <position position="210" evidence="2"/>
    </location>
    <location>
        <position position="227" evidence="2"/>
    </location>
</comment>
<comment type="similarity">
    <text evidence="1">Belongs to the RNA polymerase alpha chain family.</text>
</comment>
<geneLocation type="chloroplast"/>
<feature type="chain" id="PRO_0000175432" description="DNA-directed RNA polymerase subunit alpha">
    <location>
        <begin position="1"/>
        <end position="345"/>
    </location>
</feature>
<feature type="region of interest" description="Alpha N-terminal domain (alpha-NTD)" evidence="1">
    <location>
        <begin position="1"/>
        <end position="234"/>
    </location>
</feature>
<feature type="region of interest" description="Alpha C-terminal domain (alpha-CTD)" evidence="1">
    <location>
        <begin position="266"/>
        <end position="345"/>
    </location>
</feature>